<dbReference type="EMBL" id="M32401">
    <property type="status" value="NOT_ANNOTATED_CDS"/>
    <property type="molecule type" value="Genomic_DNA"/>
</dbReference>
<dbReference type="EMBL" id="AE000520">
    <property type="protein sequence ID" value="AAC26592.1"/>
    <property type="molecule type" value="Genomic_DNA"/>
</dbReference>
<dbReference type="PIR" id="JS0097">
    <property type="entry name" value="JS0097"/>
</dbReference>
<dbReference type="RefSeq" id="WP_010882482.1">
    <property type="nucleotide sequence ID" value="NC_021490.2"/>
</dbReference>
<dbReference type="PDB" id="2FJC">
    <property type="method" value="X-ray"/>
    <property type="resolution" value="2.50 A"/>
    <property type="chains" value="A/B/C/D/E/F/G/H/I/J/K/L/M/N/O/P=22-177"/>
</dbReference>
<dbReference type="PDBsum" id="2FJC"/>
<dbReference type="SMR" id="P16665"/>
<dbReference type="IntAct" id="P16665">
    <property type="interactions" value="3"/>
</dbReference>
<dbReference type="STRING" id="243276.TP_1038"/>
<dbReference type="EnsemblBacteria" id="AAC26592">
    <property type="protein sequence ID" value="AAC26592"/>
    <property type="gene ID" value="TP_1038"/>
</dbReference>
<dbReference type="KEGG" id="tpa:TP_1038"/>
<dbReference type="KEGG" id="tpw:TPANIC_1038"/>
<dbReference type="eggNOG" id="COG0783">
    <property type="taxonomic scope" value="Bacteria"/>
</dbReference>
<dbReference type="HOGENOM" id="CLU_098183_2_2_12"/>
<dbReference type="OrthoDB" id="9797023at2"/>
<dbReference type="EvolutionaryTrace" id="P16665"/>
<dbReference type="Proteomes" id="UP000000811">
    <property type="component" value="Chromosome"/>
</dbReference>
<dbReference type="GO" id="GO:0008199">
    <property type="term" value="F:ferric iron binding"/>
    <property type="evidence" value="ECO:0007669"/>
    <property type="project" value="InterPro"/>
</dbReference>
<dbReference type="GO" id="GO:0016722">
    <property type="term" value="F:oxidoreductase activity, acting on metal ions"/>
    <property type="evidence" value="ECO:0007669"/>
    <property type="project" value="InterPro"/>
</dbReference>
<dbReference type="CDD" id="cd01043">
    <property type="entry name" value="DPS"/>
    <property type="match status" value="1"/>
</dbReference>
<dbReference type="Gene3D" id="1.20.1260.10">
    <property type="match status" value="1"/>
</dbReference>
<dbReference type="InterPro" id="IPR002177">
    <property type="entry name" value="DPS_DNA-bd"/>
</dbReference>
<dbReference type="InterPro" id="IPR023188">
    <property type="entry name" value="DPS_DNA-bd_CS"/>
</dbReference>
<dbReference type="InterPro" id="IPR012347">
    <property type="entry name" value="Ferritin-like"/>
</dbReference>
<dbReference type="InterPro" id="IPR009078">
    <property type="entry name" value="Ferritin-like_SF"/>
</dbReference>
<dbReference type="InterPro" id="IPR008331">
    <property type="entry name" value="Ferritin_DPS_dom"/>
</dbReference>
<dbReference type="PANTHER" id="PTHR42932">
    <property type="entry name" value="GENERAL STRESS PROTEIN 20U"/>
    <property type="match status" value="1"/>
</dbReference>
<dbReference type="PANTHER" id="PTHR42932:SF1">
    <property type="entry name" value="GENERAL STRESS PROTEIN 20U"/>
    <property type="match status" value="1"/>
</dbReference>
<dbReference type="Pfam" id="PF00210">
    <property type="entry name" value="Ferritin"/>
    <property type="match status" value="1"/>
</dbReference>
<dbReference type="PIRSF" id="PIRSF005900">
    <property type="entry name" value="Dps"/>
    <property type="match status" value="1"/>
</dbReference>
<dbReference type="PRINTS" id="PR01346">
    <property type="entry name" value="HELNAPAPROT"/>
</dbReference>
<dbReference type="SUPFAM" id="SSF47240">
    <property type="entry name" value="Ferritin-like"/>
    <property type="match status" value="1"/>
</dbReference>
<dbReference type="PROSITE" id="PS00818">
    <property type="entry name" value="DPS_1"/>
    <property type="match status" value="1"/>
</dbReference>
<dbReference type="PROSITE" id="PS00819">
    <property type="entry name" value="DPS_2"/>
    <property type="match status" value="1"/>
</dbReference>
<name>TPF1_TREPA</name>
<gene>
    <name type="primary">tpf1</name>
    <name type="ordered locus">TP_1038</name>
</gene>
<reference key="1">
    <citation type="journal article" date="1989" name="Microb. Pathog.">
        <title>Treponema pallidum subspecies pallidum (Nichols) and Treponema pallidum subspecies pertenue (CDC 2575) differ in at least one nucleotide: comparison of two homologous antigens.</title>
        <authorList>
            <person name="Noordhoek G.T."/>
            <person name="Hermans P.W.M."/>
            <person name="Paul A.N."/>
            <person name="Schouls L.M."/>
            <person name="van der Sluis J.J."/>
            <person name="van Embden J.D.A."/>
        </authorList>
    </citation>
    <scope>NUCLEOTIDE SEQUENCE [GENOMIC DNA]</scope>
    <scope>PROTEIN SEQUENCE OF 2-12</scope>
    <source>
        <strain>Nichols</strain>
    </source>
</reference>
<reference key="2">
    <citation type="journal article" date="1989" name="Infect. Immun.">
        <title>Primary structure of an oligomeric antigen of Treponema pallidum.</title>
        <authorList>
            <person name="Walfield A.M."/>
            <person name="Roche E.S."/>
            <person name="Zounes M.C."/>
            <person name="Kirkpatrick H."/>
            <person name="Wild M.A."/>
            <person name="Textor G."/>
            <person name="Tsai P.K."/>
            <person name="Richardson C."/>
        </authorList>
    </citation>
    <scope>NUCLEOTIDE SEQUENCE [GENOMIC DNA]</scope>
</reference>
<reference key="3">
    <citation type="journal article" date="1998" name="Science">
        <title>Complete genome sequence of Treponema pallidum, the syphilis spirochete.</title>
        <authorList>
            <person name="Fraser C.M."/>
            <person name="Norris S.J."/>
            <person name="Weinstock G.M."/>
            <person name="White O."/>
            <person name="Sutton G.G."/>
            <person name="Dodson R.J."/>
            <person name="Gwinn M.L."/>
            <person name="Hickey E.K."/>
            <person name="Clayton R.A."/>
            <person name="Ketchum K.A."/>
            <person name="Sodergren E."/>
            <person name="Hardham J.M."/>
            <person name="McLeod M.P."/>
            <person name="Salzberg S.L."/>
            <person name="Peterson J.D."/>
            <person name="Khalak H.G."/>
            <person name="Richardson D.L."/>
            <person name="Howell J.K."/>
            <person name="Chidambaram M."/>
            <person name="Utterback T.R."/>
            <person name="McDonald L.A."/>
            <person name="Artiach P."/>
            <person name="Bowman C."/>
            <person name="Cotton M.D."/>
            <person name="Fujii C."/>
            <person name="Garland S.A."/>
            <person name="Hatch B."/>
            <person name="Horst K."/>
            <person name="Roberts K.M."/>
            <person name="Sandusky M."/>
            <person name="Weidman J.F."/>
            <person name="Smith H.O."/>
            <person name="Venter J.C."/>
        </authorList>
    </citation>
    <scope>NUCLEOTIDE SEQUENCE [LARGE SCALE GENOMIC DNA]</scope>
    <source>
        <strain>Nichols</strain>
    </source>
</reference>
<reference key="4">
    <citation type="journal article" date="1987" name="J. Bacteriol.">
        <title>Role of disulfide bonds in the oligomeric structure and protease resistance of recombinant and native Treponema pallidum surface antigen 4D.</title>
        <authorList>
            <person name="Radolf J.D."/>
            <person name="Borenstein L.A."/>
            <person name="Kim J.Y."/>
            <person name="Fehniger T.E."/>
            <person name="Lovett M.A."/>
        </authorList>
    </citation>
    <scope>DISULFIDE BONDS</scope>
    <source>
        <strain>Nichols</strain>
    </source>
</reference>
<proteinExistence type="evidence at protein level"/>
<feature type="initiator methionine" description="Removed" evidence="1">
    <location>
        <position position="1"/>
    </location>
</feature>
<feature type="chain" id="PRO_0000201664" description="Antigen TpF1">
    <location>
        <begin position="2"/>
        <end position="177"/>
    </location>
</feature>
<feature type="helix" evidence="3">
    <location>
        <begin position="29"/>
        <end position="59"/>
    </location>
</feature>
<feature type="strand" evidence="3">
    <location>
        <begin position="60"/>
        <end position="62"/>
    </location>
</feature>
<feature type="helix" evidence="3">
    <location>
        <begin position="65"/>
        <end position="92"/>
    </location>
</feature>
<feature type="helix" evidence="3">
    <location>
        <begin position="101"/>
        <end position="107"/>
    </location>
</feature>
<feature type="strand" evidence="3">
    <location>
        <begin position="117"/>
        <end position="119"/>
    </location>
</feature>
<feature type="helix" evidence="3">
    <location>
        <begin position="120"/>
        <end position="147"/>
    </location>
</feature>
<feature type="helix" evidence="3">
    <location>
        <begin position="151"/>
        <end position="175"/>
    </location>
</feature>
<comment type="function">
    <text>May play an important structural role in the outer membrane.</text>
</comment>
<comment type="subunit">
    <text>Homodecamer; either linked or stabilized by disulfide bonds.</text>
</comment>
<comment type="similarity">
    <text evidence="2">Belongs to the Dps family.</text>
</comment>
<evidence type="ECO:0000269" key="1">
    <source>
    </source>
</evidence>
<evidence type="ECO:0000305" key="2"/>
<evidence type="ECO:0007829" key="3">
    <source>
        <dbReference type="PDB" id="2FJC"/>
    </source>
</evidence>
<accession>P16665</accession>
<sequence length="177" mass="19361">MNMCTDGKKYHSTATSAAVGASAPGVPDARAIAAICEQLRQHVADLGVLYIKLHNYHWHIYGIEFKQVHELLEEYYVSVTEAFDTIAERLLQLGAQAPASMAEYLALSGIAEETEKEITIVSALARVKRDFEYLSTRFSQTQVLAAESGDAVTDGIITDILRTLGKAIWMLGATLKA</sequence>
<organism>
    <name type="scientific">Treponema pallidum (strain Nichols)</name>
    <dbReference type="NCBI Taxonomy" id="243276"/>
    <lineage>
        <taxon>Bacteria</taxon>
        <taxon>Pseudomonadati</taxon>
        <taxon>Spirochaetota</taxon>
        <taxon>Spirochaetia</taxon>
        <taxon>Spirochaetales</taxon>
        <taxon>Treponemataceae</taxon>
        <taxon>Treponema</taxon>
    </lineage>
</organism>
<protein>
    <recommendedName>
        <fullName>Antigen TpF1</fullName>
    </recommendedName>
    <alternativeName>
        <fullName>Antigen 4D</fullName>
    </alternativeName>
    <alternativeName>
        <fullName>Antigen C1-5</fullName>
    </alternativeName>
</protein>
<keyword id="KW-0002">3D-structure</keyword>
<keyword id="KW-0903">Direct protein sequencing</keyword>
<keyword id="KW-1015">Disulfide bond</keyword>
<keyword id="KW-1185">Reference proteome</keyword>